<name>RHO_AQUAE</name>
<proteinExistence type="inferred from homology"/>
<reference key="1">
    <citation type="journal article" date="1998" name="Nature">
        <title>The complete genome of the hyperthermophilic bacterium Aquifex aeolicus.</title>
        <authorList>
            <person name="Deckert G."/>
            <person name="Warren P.V."/>
            <person name="Gaasterland T."/>
            <person name="Young W.G."/>
            <person name="Lenox A.L."/>
            <person name="Graham D.E."/>
            <person name="Overbeek R."/>
            <person name="Snead M.A."/>
            <person name="Keller M."/>
            <person name="Aujay M."/>
            <person name="Huber R."/>
            <person name="Feldman R.A."/>
            <person name="Short J.M."/>
            <person name="Olsen G.J."/>
            <person name="Swanson R.V."/>
        </authorList>
    </citation>
    <scope>NUCLEOTIDE SEQUENCE [LARGE SCALE GENOMIC DNA]</scope>
    <source>
        <strain>VF5</strain>
    </source>
</reference>
<gene>
    <name evidence="1" type="primary">rho</name>
    <name type="ordered locus">aq_873</name>
</gene>
<dbReference type="EC" id="3.6.4.-" evidence="1"/>
<dbReference type="EMBL" id="AE000657">
    <property type="protein sequence ID" value="AAC06989.1"/>
    <property type="molecule type" value="Genomic_DNA"/>
</dbReference>
<dbReference type="PIR" id="D70375">
    <property type="entry name" value="D70375"/>
</dbReference>
<dbReference type="RefSeq" id="NP_213592.1">
    <property type="nucleotide sequence ID" value="NC_000918.1"/>
</dbReference>
<dbReference type="RefSeq" id="WP_010880530.1">
    <property type="nucleotide sequence ID" value="NC_000918.1"/>
</dbReference>
<dbReference type="SMR" id="O67031"/>
<dbReference type="FunCoup" id="O67031">
    <property type="interactions" value="441"/>
</dbReference>
<dbReference type="STRING" id="224324.aq_873"/>
<dbReference type="EnsemblBacteria" id="AAC06989">
    <property type="protein sequence ID" value="AAC06989"/>
    <property type="gene ID" value="aq_873"/>
</dbReference>
<dbReference type="KEGG" id="aae:aq_873"/>
<dbReference type="PATRIC" id="fig|224324.8.peg.680"/>
<dbReference type="eggNOG" id="COG1158">
    <property type="taxonomic scope" value="Bacteria"/>
</dbReference>
<dbReference type="HOGENOM" id="CLU_016377_4_3_0"/>
<dbReference type="InParanoid" id="O67031"/>
<dbReference type="OrthoDB" id="9805197at2"/>
<dbReference type="Proteomes" id="UP000000798">
    <property type="component" value="Chromosome"/>
</dbReference>
<dbReference type="GO" id="GO:0005524">
    <property type="term" value="F:ATP binding"/>
    <property type="evidence" value="ECO:0007669"/>
    <property type="project" value="UniProtKB-UniRule"/>
</dbReference>
<dbReference type="GO" id="GO:0016887">
    <property type="term" value="F:ATP hydrolysis activity"/>
    <property type="evidence" value="ECO:0007669"/>
    <property type="project" value="InterPro"/>
</dbReference>
<dbReference type="GO" id="GO:0008186">
    <property type="term" value="F:ATP-dependent activity, acting on RNA"/>
    <property type="evidence" value="ECO:0007669"/>
    <property type="project" value="InterPro"/>
</dbReference>
<dbReference type="GO" id="GO:0004386">
    <property type="term" value="F:helicase activity"/>
    <property type="evidence" value="ECO:0007669"/>
    <property type="project" value="UniProtKB-UniRule"/>
</dbReference>
<dbReference type="GO" id="GO:0003723">
    <property type="term" value="F:RNA binding"/>
    <property type="evidence" value="ECO:0007669"/>
    <property type="project" value="UniProtKB-UniRule"/>
</dbReference>
<dbReference type="GO" id="GO:0006353">
    <property type="term" value="P:DNA-templated transcription termination"/>
    <property type="evidence" value="ECO:0000318"/>
    <property type="project" value="GO_Central"/>
</dbReference>
<dbReference type="CDD" id="cd04459">
    <property type="entry name" value="Rho_CSD"/>
    <property type="match status" value="1"/>
</dbReference>
<dbReference type="CDD" id="cd01128">
    <property type="entry name" value="rho_factor_C"/>
    <property type="match status" value="1"/>
</dbReference>
<dbReference type="Gene3D" id="2.40.50.140">
    <property type="entry name" value="Nucleic acid-binding proteins"/>
    <property type="match status" value="1"/>
</dbReference>
<dbReference type="Gene3D" id="3.40.50.300">
    <property type="entry name" value="P-loop containing nucleotide triphosphate hydrolases"/>
    <property type="match status" value="1"/>
</dbReference>
<dbReference type="HAMAP" id="MF_01884">
    <property type="entry name" value="Rho"/>
    <property type="match status" value="1"/>
</dbReference>
<dbReference type="InterPro" id="IPR003593">
    <property type="entry name" value="AAA+_ATPase"/>
</dbReference>
<dbReference type="InterPro" id="IPR000194">
    <property type="entry name" value="ATPase_F1/V1/A1_a/bsu_nucl-bd"/>
</dbReference>
<dbReference type="InterPro" id="IPR011129">
    <property type="entry name" value="CSD"/>
</dbReference>
<dbReference type="InterPro" id="IPR012340">
    <property type="entry name" value="NA-bd_OB-fold"/>
</dbReference>
<dbReference type="InterPro" id="IPR027417">
    <property type="entry name" value="P-loop_NTPase"/>
</dbReference>
<dbReference type="InterPro" id="IPR011112">
    <property type="entry name" value="Rho-like_N"/>
</dbReference>
<dbReference type="InterPro" id="IPR041703">
    <property type="entry name" value="Rho_factor_ATP-bd"/>
</dbReference>
<dbReference type="InterPro" id="IPR036269">
    <property type="entry name" value="Rho_N_sf"/>
</dbReference>
<dbReference type="InterPro" id="IPR011113">
    <property type="entry name" value="Rho_RNA-bd"/>
</dbReference>
<dbReference type="InterPro" id="IPR004665">
    <property type="entry name" value="Term_rho"/>
</dbReference>
<dbReference type="NCBIfam" id="NF006886">
    <property type="entry name" value="PRK09376.1"/>
    <property type="match status" value="1"/>
</dbReference>
<dbReference type="NCBIfam" id="TIGR00767">
    <property type="entry name" value="rho"/>
    <property type="match status" value="1"/>
</dbReference>
<dbReference type="PANTHER" id="PTHR46425">
    <property type="entry name" value="TRANSCRIPTION TERMINATION FACTOR RHO"/>
    <property type="match status" value="1"/>
</dbReference>
<dbReference type="PANTHER" id="PTHR46425:SF1">
    <property type="entry name" value="TRANSCRIPTION TERMINATION FACTOR RHO"/>
    <property type="match status" value="1"/>
</dbReference>
<dbReference type="Pfam" id="PF00006">
    <property type="entry name" value="ATP-synt_ab"/>
    <property type="match status" value="1"/>
</dbReference>
<dbReference type="Pfam" id="PF07498">
    <property type="entry name" value="Rho_N"/>
    <property type="match status" value="1"/>
</dbReference>
<dbReference type="Pfam" id="PF07497">
    <property type="entry name" value="Rho_RNA_bind"/>
    <property type="match status" value="1"/>
</dbReference>
<dbReference type="SMART" id="SM00382">
    <property type="entry name" value="AAA"/>
    <property type="match status" value="1"/>
</dbReference>
<dbReference type="SMART" id="SM00357">
    <property type="entry name" value="CSP"/>
    <property type="match status" value="1"/>
</dbReference>
<dbReference type="SMART" id="SM00959">
    <property type="entry name" value="Rho_N"/>
    <property type="match status" value="1"/>
</dbReference>
<dbReference type="SUPFAM" id="SSF50249">
    <property type="entry name" value="Nucleic acid-binding proteins"/>
    <property type="match status" value="1"/>
</dbReference>
<dbReference type="SUPFAM" id="SSF52540">
    <property type="entry name" value="P-loop containing nucleoside triphosphate hydrolases"/>
    <property type="match status" value="1"/>
</dbReference>
<dbReference type="SUPFAM" id="SSF68912">
    <property type="entry name" value="Rho N-terminal domain-like"/>
    <property type="match status" value="1"/>
</dbReference>
<dbReference type="PROSITE" id="PS51856">
    <property type="entry name" value="RHO_RNA_BD"/>
    <property type="match status" value="1"/>
</dbReference>
<accession>O67031</accession>
<sequence length="436" mass="50092">MTQQTAQQEQQKSEVKIYSREELKQKTLAELQKIGKELGLTRTTGLKKEELIEKILKAQLEKSRLVFVKGVLEILPEGYGFLRMPENNYMPSWNDVYVAPSQIKKFGLRTGDTIEGFARLPRENEKYKALIRMESVNGLPPDPEILKRRPQFEKLTPLHPMERFKLEYDPNELSTRVVSLIAPIGKGQRGLIVAPPKAGKTVLLQKIAQAIIRNHPEVYLIILLIDERPEEVTEMRRIVKDKAEVVASTFDEPPERHMQVAEIVVEKAKRMVELKKDVVILMDSLTRFTRASNAVTPPTGRVLTGGIEITAFQRPKKFFGAARNIEEGGSLTIIATALVETGSKMDDVIYEEFKGTGNMEIHLDRRLMERRIFPAINIEKSGTRKEELLLEPWELQRIWVLRKFLSTMDPVEAMEFLLEKLRRFKTNEEFLKAMNA</sequence>
<organism>
    <name type="scientific">Aquifex aeolicus (strain VF5)</name>
    <dbReference type="NCBI Taxonomy" id="224324"/>
    <lineage>
        <taxon>Bacteria</taxon>
        <taxon>Pseudomonadati</taxon>
        <taxon>Aquificota</taxon>
        <taxon>Aquificia</taxon>
        <taxon>Aquificales</taxon>
        <taxon>Aquificaceae</taxon>
        <taxon>Aquifex</taxon>
    </lineage>
</organism>
<feature type="chain" id="PRO_0000188954" description="Transcription termination factor Rho">
    <location>
        <begin position="1"/>
        <end position="436"/>
    </location>
</feature>
<feature type="domain" description="Rho RNA-BD" evidence="2">
    <location>
        <begin position="65"/>
        <end position="140"/>
    </location>
</feature>
<feature type="binding site" evidence="1">
    <location>
        <begin position="185"/>
        <end position="190"/>
    </location>
    <ligand>
        <name>ATP</name>
        <dbReference type="ChEBI" id="CHEBI:30616"/>
    </ligand>
</feature>
<feature type="binding site" evidence="1">
    <location>
        <begin position="197"/>
        <end position="202"/>
    </location>
    <ligand>
        <name>ATP</name>
        <dbReference type="ChEBI" id="CHEBI:30616"/>
    </ligand>
</feature>
<feature type="binding site" evidence="1">
    <location>
        <position position="228"/>
    </location>
    <ligand>
        <name>ATP</name>
        <dbReference type="ChEBI" id="CHEBI:30616"/>
    </ligand>
</feature>
<comment type="function">
    <text evidence="1">Facilitates transcription termination by a mechanism that involves Rho binding to the nascent RNA, activation of Rho's RNA-dependent ATPase activity, and release of the mRNA from the DNA template.</text>
</comment>
<comment type="subunit">
    <text evidence="1">Homohexamer. The homohexamer assembles into an open ring structure.</text>
</comment>
<comment type="similarity">
    <text evidence="1">Belongs to the Rho family.</text>
</comment>
<keyword id="KW-0067">ATP-binding</keyword>
<keyword id="KW-0347">Helicase</keyword>
<keyword id="KW-0378">Hydrolase</keyword>
<keyword id="KW-0547">Nucleotide-binding</keyword>
<keyword id="KW-1185">Reference proteome</keyword>
<keyword id="KW-0694">RNA-binding</keyword>
<keyword id="KW-0804">Transcription</keyword>
<keyword id="KW-0805">Transcription regulation</keyword>
<keyword id="KW-0806">Transcription termination</keyword>
<protein>
    <recommendedName>
        <fullName evidence="1">Transcription termination factor Rho</fullName>
        <ecNumber evidence="1">3.6.4.-</ecNumber>
    </recommendedName>
    <alternativeName>
        <fullName evidence="1">ATP-dependent helicase Rho</fullName>
    </alternativeName>
</protein>
<evidence type="ECO:0000255" key="1">
    <source>
        <dbReference type="HAMAP-Rule" id="MF_01884"/>
    </source>
</evidence>
<evidence type="ECO:0000255" key="2">
    <source>
        <dbReference type="PROSITE-ProRule" id="PRU01203"/>
    </source>
</evidence>